<gene>
    <name type="primary">ERVK-19</name>
</gene>
<organism>
    <name type="scientific">Homo sapiens</name>
    <name type="common">Human</name>
    <dbReference type="NCBI Taxonomy" id="9606"/>
    <lineage>
        <taxon>Eukaryota</taxon>
        <taxon>Metazoa</taxon>
        <taxon>Chordata</taxon>
        <taxon>Craniata</taxon>
        <taxon>Vertebrata</taxon>
        <taxon>Euteleostomi</taxon>
        <taxon>Mammalia</taxon>
        <taxon>Eutheria</taxon>
        <taxon>Euarchontoglires</taxon>
        <taxon>Primates</taxon>
        <taxon>Haplorrhini</taxon>
        <taxon>Catarrhini</taxon>
        <taxon>Hominidae</taxon>
        <taxon>Homo</taxon>
    </lineage>
</organism>
<dbReference type="EMBL" id="Y17833">
    <property type="protein sequence ID" value="CAA76881.1"/>
    <property type="molecule type" value="Genomic_DNA"/>
</dbReference>
<dbReference type="EMBL" id="AC112702">
    <property type="status" value="NOT_ANNOTATED_CDS"/>
    <property type="molecule type" value="Genomic_DNA"/>
</dbReference>
<dbReference type="SMR" id="Q9YNA8"/>
<dbReference type="iPTMnet" id="Q9YNA8"/>
<dbReference type="PhosphoSitePlus" id="Q9YNA8"/>
<dbReference type="BioMuta" id="HGNC:39026"/>
<dbReference type="jPOST" id="Q9YNA8"/>
<dbReference type="MassIVE" id="Q9YNA8"/>
<dbReference type="GeneCards" id="ERVK-19"/>
<dbReference type="HGNC" id="HGNC:39026">
    <property type="gene designation" value="ERVK-19"/>
</dbReference>
<dbReference type="neXtProt" id="NX_Q9YNA8"/>
<dbReference type="PhylomeDB" id="Q9YNA8"/>
<dbReference type="Pharos" id="Q9YNA8">
    <property type="development level" value="Tdark"/>
</dbReference>
<dbReference type="Proteomes" id="UP000005640">
    <property type="component" value="Unplaced"/>
</dbReference>
<dbReference type="GO" id="GO:0005886">
    <property type="term" value="C:plasma membrane"/>
    <property type="evidence" value="ECO:0007669"/>
    <property type="project" value="UniProtKB-SubCell"/>
</dbReference>
<dbReference type="GO" id="GO:0003676">
    <property type="term" value="F:nucleic acid binding"/>
    <property type="evidence" value="ECO:0007669"/>
    <property type="project" value="InterPro"/>
</dbReference>
<dbReference type="GO" id="GO:0005198">
    <property type="term" value="F:structural molecule activity"/>
    <property type="evidence" value="ECO:0007669"/>
    <property type="project" value="InterPro"/>
</dbReference>
<dbReference type="GO" id="GO:0008270">
    <property type="term" value="F:zinc ion binding"/>
    <property type="evidence" value="ECO:0007669"/>
    <property type="project" value="UniProtKB-KW"/>
</dbReference>
<dbReference type="GO" id="GO:0075523">
    <property type="term" value="P:viral translational frameshifting"/>
    <property type="evidence" value="ECO:0007669"/>
    <property type="project" value="UniProtKB-KW"/>
</dbReference>
<dbReference type="Gene3D" id="1.10.1200.30">
    <property type="match status" value="1"/>
</dbReference>
<dbReference type="Gene3D" id="1.10.375.10">
    <property type="entry name" value="Human Immunodeficiency Virus Type 1 Capsid Protein"/>
    <property type="match status" value="1"/>
</dbReference>
<dbReference type="Gene3D" id="1.10.150.490">
    <property type="entry name" value="Retroviral GAG p10 protein"/>
    <property type="match status" value="1"/>
</dbReference>
<dbReference type="Gene3D" id="4.10.60.10">
    <property type="entry name" value="Zinc finger, CCHC-type"/>
    <property type="match status" value="1"/>
</dbReference>
<dbReference type="InterPro" id="IPR003322">
    <property type="entry name" value="B_retro_matrix"/>
</dbReference>
<dbReference type="InterPro" id="IPR038124">
    <property type="entry name" value="B_retro_matrix_sf"/>
</dbReference>
<dbReference type="InterPro" id="IPR045345">
    <property type="entry name" value="Gag_p24_C"/>
</dbReference>
<dbReference type="InterPro" id="IPR050195">
    <property type="entry name" value="Primate_lentivir_Gag_pol-like"/>
</dbReference>
<dbReference type="InterPro" id="IPR008916">
    <property type="entry name" value="Retrov_capsid_C"/>
</dbReference>
<dbReference type="InterPro" id="IPR008919">
    <property type="entry name" value="Retrov_capsid_N"/>
</dbReference>
<dbReference type="InterPro" id="IPR010999">
    <property type="entry name" value="Retrovr_matrix"/>
</dbReference>
<dbReference type="InterPro" id="IPR001878">
    <property type="entry name" value="Znf_CCHC"/>
</dbReference>
<dbReference type="InterPro" id="IPR036875">
    <property type="entry name" value="Znf_CCHC_sf"/>
</dbReference>
<dbReference type="PANTHER" id="PTHR40389">
    <property type="entry name" value="ENDOGENOUS RETROVIRUS GROUP K MEMBER 24 GAG POLYPROTEIN-RELATED"/>
    <property type="match status" value="1"/>
</dbReference>
<dbReference type="PANTHER" id="PTHR40389:SF2">
    <property type="entry name" value="ENDOGENOUS RETROVIRUS GROUP K MEMBER 24 GAG POLYPROTEIN-RELATED"/>
    <property type="match status" value="1"/>
</dbReference>
<dbReference type="Pfam" id="PF02337">
    <property type="entry name" value="Gag_p10"/>
    <property type="match status" value="1"/>
</dbReference>
<dbReference type="Pfam" id="PF00607">
    <property type="entry name" value="Gag_p24"/>
    <property type="match status" value="1"/>
</dbReference>
<dbReference type="Pfam" id="PF19317">
    <property type="entry name" value="Gag_p24_C"/>
    <property type="match status" value="1"/>
</dbReference>
<dbReference type="Pfam" id="PF00098">
    <property type="entry name" value="zf-CCHC"/>
    <property type="match status" value="1"/>
</dbReference>
<dbReference type="Pfam" id="PF14787">
    <property type="entry name" value="zf-CCHC_5"/>
    <property type="match status" value="1"/>
</dbReference>
<dbReference type="SMART" id="SM00343">
    <property type="entry name" value="ZnF_C2HC"/>
    <property type="match status" value="2"/>
</dbReference>
<dbReference type="SUPFAM" id="SSF47836">
    <property type="entry name" value="Retroviral matrix proteins"/>
    <property type="match status" value="1"/>
</dbReference>
<dbReference type="SUPFAM" id="SSF47353">
    <property type="entry name" value="Retrovirus capsid dimerization domain-like"/>
    <property type="match status" value="1"/>
</dbReference>
<dbReference type="SUPFAM" id="SSF47943">
    <property type="entry name" value="Retrovirus capsid protein, N-terminal core domain"/>
    <property type="match status" value="1"/>
</dbReference>
<dbReference type="SUPFAM" id="SSF57756">
    <property type="entry name" value="Retrovirus zinc finger-like domains"/>
    <property type="match status" value="2"/>
</dbReference>
<dbReference type="PROSITE" id="PS50158">
    <property type="entry name" value="ZF_CCHC"/>
    <property type="match status" value="1"/>
</dbReference>
<accession>Q9YNA8</accession>
<proteinExistence type="evidence at protein level"/>
<feature type="initiator methionine" description="Removed" evidence="2">
    <location>
        <position position="1"/>
    </location>
</feature>
<feature type="chain" id="PRO_0000186746" description="Endogenous retrovirus group K member 19 Gag polyprotein">
    <location>
        <begin position="2"/>
        <end position="666"/>
    </location>
</feature>
<feature type="zinc finger region" description="CCHC-type 1" evidence="3">
    <location>
        <begin position="544"/>
        <end position="561"/>
    </location>
</feature>
<feature type="zinc finger region" description="CCHC-type 2" evidence="3">
    <location>
        <begin position="580"/>
        <end position="597"/>
    </location>
</feature>
<feature type="region of interest" description="Disordered" evidence="4">
    <location>
        <begin position="170"/>
        <end position="189"/>
    </location>
</feature>
<feature type="region of interest" description="Disordered" evidence="4">
    <location>
        <begin position="223"/>
        <end position="264"/>
    </location>
</feature>
<feature type="region of interest" description="Disordered" evidence="4">
    <location>
        <begin position="598"/>
        <end position="640"/>
    </location>
</feature>
<feature type="compositionally biased region" description="Pro residues" evidence="4">
    <location>
        <begin position="232"/>
        <end position="247"/>
    </location>
</feature>
<feature type="compositionally biased region" description="Polar residues" evidence="4">
    <location>
        <begin position="604"/>
        <end position="622"/>
    </location>
</feature>
<feature type="lipid moiety-binding region" description="N-myristoyl glycine" evidence="2">
    <location>
        <position position="2"/>
    </location>
</feature>
<feature type="sequence conflict" description="In Ref. 1; CAA76881." evidence="5" ref="1">
    <original>V</original>
    <variation>G</variation>
    <location>
        <position position="167"/>
    </location>
</feature>
<feature type="sequence conflict" description="In Ref. 1; CAA76881." evidence="5" ref="1">
    <original>L</original>
    <variation>V</variation>
    <location>
        <position position="224"/>
    </location>
</feature>
<feature type="sequence conflict" description="In Ref. 1; CAA76881." evidence="5" ref="1">
    <original>T</original>
    <variation>M</variation>
    <location>
        <position position="285"/>
    </location>
</feature>
<feature type="sequence conflict" description="In Ref. 1; CAA76881." evidence="5" ref="1">
    <original>I</original>
    <variation>N</variation>
    <location>
        <position position="468"/>
    </location>
</feature>
<reference key="1">
    <citation type="journal article" date="1999" name="J. Virol.">
        <title>Genome wide screening, cloning, chromosomal assignment and expression of full-length human endogenous retrovirus type K (HERV-K).</title>
        <authorList>
            <person name="Toenjes R.R."/>
            <person name="Czauderna F."/>
            <person name="Kurth R."/>
        </authorList>
    </citation>
    <scope>NUCLEOTIDE SEQUENCE [GENOMIC DNA]</scope>
</reference>
<reference key="2">
    <citation type="journal article" date="2004" name="Nature">
        <title>The DNA sequence and biology of human chromosome 19.</title>
        <authorList>
            <person name="Grimwood J."/>
            <person name="Gordon L.A."/>
            <person name="Olsen A.S."/>
            <person name="Terry A."/>
            <person name="Schmutz J."/>
            <person name="Lamerdin J.E."/>
            <person name="Hellsten U."/>
            <person name="Goodstein D."/>
            <person name="Couronne O."/>
            <person name="Tran-Gyamfi M."/>
            <person name="Aerts A."/>
            <person name="Altherr M."/>
            <person name="Ashworth L."/>
            <person name="Bajorek E."/>
            <person name="Black S."/>
            <person name="Branscomb E."/>
            <person name="Caenepeel S."/>
            <person name="Carrano A.V."/>
            <person name="Caoile C."/>
            <person name="Chan Y.M."/>
            <person name="Christensen M."/>
            <person name="Cleland C.A."/>
            <person name="Copeland A."/>
            <person name="Dalin E."/>
            <person name="Dehal P."/>
            <person name="Denys M."/>
            <person name="Detter J.C."/>
            <person name="Escobar J."/>
            <person name="Flowers D."/>
            <person name="Fotopulos D."/>
            <person name="Garcia C."/>
            <person name="Georgescu A.M."/>
            <person name="Glavina T."/>
            <person name="Gomez M."/>
            <person name="Gonzales E."/>
            <person name="Groza M."/>
            <person name="Hammon N."/>
            <person name="Hawkins T."/>
            <person name="Haydu L."/>
            <person name="Ho I."/>
            <person name="Huang W."/>
            <person name="Israni S."/>
            <person name="Jett J."/>
            <person name="Kadner K."/>
            <person name="Kimball H."/>
            <person name="Kobayashi A."/>
            <person name="Larionov V."/>
            <person name="Leem S.-H."/>
            <person name="Lopez F."/>
            <person name="Lou Y."/>
            <person name="Lowry S."/>
            <person name="Malfatti S."/>
            <person name="Martinez D."/>
            <person name="McCready P.M."/>
            <person name="Medina C."/>
            <person name="Morgan J."/>
            <person name="Nelson K."/>
            <person name="Nolan M."/>
            <person name="Ovcharenko I."/>
            <person name="Pitluck S."/>
            <person name="Pollard M."/>
            <person name="Popkie A.P."/>
            <person name="Predki P."/>
            <person name="Quan G."/>
            <person name="Ramirez L."/>
            <person name="Rash S."/>
            <person name="Retterer J."/>
            <person name="Rodriguez A."/>
            <person name="Rogers S."/>
            <person name="Salamov A."/>
            <person name="Salazar A."/>
            <person name="She X."/>
            <person name="Smith D."/>
            <person name="Slezak T."/>
            <person name="Solovyev V."/>
            <person name="Thayer N."/>
            <person name="Tice H."/>
            <person name="Tsai M."/>
            <person name="Ustaszewska A."/>
            <person name="Vo N."/>
            <person name="Wagner M."/>
            <person name="Wheeler J."/>
            <person name="Wu K."/>
            <person name="Xie G."/>
            <person name="Yang J."/>
            <person name="Dubchak I."/>
            <person name="Furey T.S."/>
            <person name="DeJong P."/>
            <person name="Dickson M."/>
            <person name="Gordon D."/>
            <person name="Eichler E.E."/>
            <person name="Pennacchio L.A."/>
            <person name="Richardson P."/>
            <person name="Stubbs L."/>
            <person name="Rokhsar D.S."/>
            <person name="Myers R.M."/>
            <person name="Rubin E.M."/>
            <person name="Lucas S.M."/>
        </authorList>
    </citation>
    <scope>NUCLEOTIDE SEQUENCE [LARGE SCALE GENOMIC DNA]</scope>
</reference>
<reference key="3">
    <citation type="journal article" date="1995" name="J. Virol.">
        <title>Human endogenous retrovirus K10: expression of Gag protein and detection of antibodies in patients with seminomas.</title>
        <authorList>
            <person name="Sauter M."/>
            <person name="Schommer S."/>
            <person name="Kremmer E."/>
            <person name="Remberger K."/>
            <person name="Doelken G."/>
            <person name="Lemm I."/>
            <person name="Buck M."/>
            <person name="Best B."/>
            <person name="Neumann-Haefelin D."/>
            <person name="Mueller-Lantzsch N."/>
        </authorList>
    </citation>
    <scope>CHARACTERIZATION</scope>
</reference>
<protein>
    <recommendedName>
        <fullName>Endogenous retrovirus group K member 19 Gag polyprotein</fullName>
    </recommendedName>
    <alternativeName>
        <fullName>HERV-K(C19) Gag protein</fullName>
    </alternativeName>
    <alternativeName>
        <fullName>HERV-K_19q11 provirus ancestral Gag polyprotein</fullName>
        <shortName>Gag polyprotein</shortName>
    </alternativeName>
</protein>
<sequence>MGQTKSKIKSKYASYLSFIKILLKRGGVKVSTKNLIKLFQIIEQFCPWFPEQGTLDLKDWKRIGKELKQAGRKGNIIPLTVWNDWAIIKAALEPFQTEEDSVSVSDAPGSCIIDCNENTRKKSQKETESLHCEYVAEPVMAQSTQNVDYNQLQEVIYPETLKLEGKVPELVGPSESKPRGTSRLPAGQVPVTLQPQTQVKENKTQPPVAYQYWPPAELQYRPPLESQYGYPGMPPAPQGRAPYPQPPTRRLNPTAPPSRRGSELHEIIDKSRKEGDTEAWQFPVTLEPMPPGEGAQEGEPPTVEARYKSFSIKMLKDMKEGVKQYGPNSPYMRTLLDSIAHGHRLIPYDWEILAKSSLSPSQFLQFKTWWIDGVQEQVRRNRAANPPVNIDADQLLGIGQNWSTISQQALMQNEAIEQVRAICLRAWEKIQDPGSTCPSFNTVRQGSKEPYPDFVARLQDVAQKSIAIEKARKVIVELMAYENPNPECQSAIKPLKGKVPAGSDVISEYVKACDGMGGAMHKAMLMAQAITGVVLGGQVRTFGGKCYNCGQIGHLKKNCPVLNKQNITIQATTTGREPPDLCPRCKKGKHWASQCRSKFDKNGQPLSGNEQRGQPQAPQQTGAFPIQPFVPHGFQGQQPPLSQVFQGISQLPQYNNCPPPQAAVQQ</sequence>
<evidence type="ECO:0000250" key="1"/>
<evidence type="ECO:0000255" key="2"/>
<evidence type="ECO:0000255" key="3">
    <source>
        <dbReference type="PROSITE-ProRule" id="PRU00047"/>
    </source>
</evidence>
<evidence type="ECO:0000256" key="4">
    <source>
        <dbReference type="SAM" id="MobiDB-lite"/>
    </source>
</evidence>
<evidence type="ECO:0000305" key="5"/>
<comment type="function">
    <text>The products of the Gag polyproteins of infectious retroviruses perform highly complex orchestrated tasks during the assembly, budding, maturation, and infection stages of the viral replication cycle. During viral assembly, the proteins form membrane associations and self-associations that ultimately result in budding of an immature virion from the infected cell. Gag precursors also function during viral assembly to selectively bind and package two plus strands of genomic RNA. Endogenous Gag proteins may have kept, lost or modified their original function during evolution.</text>
</comment>
<comment type="subcellular location">
    <subcellularLocation>
        <location>Cell membrane</location>
        <topology>Lipid-anchor</topology>
    </subcellularLocation>
    <text evidence="1">Cytoplasmic membrane (in a transfection system).</text>
</comment>
<comment type="alternative products">
    <event type="ribosomal frameshifting"/>
    <isoform>
        <id>Q9YNA8-1</id>
        <name>1</name>
        <sequence type="displayed"/>
    </isoform>
    <text>This protein is synthesized as a Gag polypeptide and as a Gag-Pro-Pol polyprotein. The later is the precursor of the Pro and Pol proteins. It is thought, by similarity with type-B retroviruses, to be generated by -1 frameshifts occurring at the Gag-Pro and Pro-Pol genes boundaries.</text>
</comment>
<comment type="domain">
    <text>HERV-K Gag polyprotein contains regions homologous to the matrix (MA), capsid (CA) and nucleocapsid (NC) proteins from infectious retroviruses. Evidence suggests that HERV-K(HML-2) Gag polyprotein can be cleaved into mature MA, CA and NC under certain circumstances. However, the exact boundaries as well as the size of processed Gag proteins have not been precisely determined yet.</text>
</comment>
<comment type="PTM">
    <text evidence="1">Myristoylation is essential for retroviral assembly. Alteration of the glycine residue leads to a block in the budding of particles and an accumulation of Gag inside the cell (By similarity).</text>
</comment>
<comment type="PTM">
    <text evidence="5">Specific enzymatic cleavages may yield mature proteins.</text>
</comment>
<comment type="similarity">
    <text evidence="5">Belongs to the beta type-B retroviral Gag protein family. HERV class-II K(HML-2) gag subfamily.</text>
</comment>
<name>GAK19_HUMAN</name>
<keyword id="KW-1003">Cell membrane</keyword>
<keyword id="KW-0895">ERV</keyword>
<keyword id="KW-0449">Lipoprotein</keyword>
<keyword id="KW-0472">Membrane</keyword>
<keyword id="KW-0479">Metal-binding</keyword>
<keyword id="KW-0519">Myristate</keyword>
<keyword id="KW-1185">Reference proteome</keyword>
<keyword id="KW-0677">Repeat</keyword>
<keyword id="KW-0688">Ribosomal frameshifting</keyword>
<keyword id="KW-0814">Transposable element</keyword>
<keyword id="KW-0862">Zinc</keyword>
<keyword id="KW-0863">Zinc-finger</keyword>